<reference key="1">
    <citation type="submission" date="2000-02" db="EMBL/GenBank/DDBJ databases">
        <title>Long branches in the seed plants and the root of the angiosperms.</title>
        <authorList>
            <person name="Graham S.W."/>
            <person name="Reeves P.A."/>
            <person name="Burns A."/>
            <person name="Olmstead R.G."/>
        </authorList>
    </citation>
    <scope>NUCLEOTIDE SEQUENCE [GENOMIC DNA]</scope>
</reference>
<proteinExistence type="inferred from homology"/>
<protein>
    <recommendedName>
        <fullName evidence="1">Cytochrome b559 subunit beta</fullName>
    </recommendedName>
    <alternativeName>
        <fullName evidence="1">PSII reaction center subunit VI</fullName>
    </alternativeName>
</protein>
<keyword id="KW-0150">Chloroplast</keyword>
<keyword id="KW-0249">Electron transport</keyword>
<keyword id="KW-0349">Heme</keyword>
<keyword id="KW-0408">Iron</keyword>
<keyword id="KW-0472">Membrane</keyword>
<keyword id="KW-0479">Metal-binding</keyword>
<keyword id="KW-0602">Photosynthesis</keyword>
<keyword id="KW-0604">Photosystem II</keyword>
<keyword id="KW-0934">Plastid</keyword>
<keyword id="KW-0793">Thylakoid</keyword>
<keyword id="KW-0812">Transmembrane</keyword>
<keyword id="KW-1133">Transmembrane helix</keyword>
<keyword id="KW-0813">Transport</keyword>
<comment type="function">
    <text evidence="1">This b-type cytochrome is tightly associated with the reaction center of photosystem II (PSII). PSII is a light-driven water:plastoquinone oxidoreductase that uses light energy to abstract electrons from H(2)O, generating O(2) and a proton gradient subsequently used for ATP formation. It consists of a core antenna complex that captures photons, and an electron transfer chain that converts photonic excitation into a charge separation.</text>
</comment>
<comment type="cofactor">
    <cofactor evidence="1">
        <name>heme b</name>
        <dbReference type="ChEBI" id="CHEBI:60344"/>
    </cofactor>
    <text evidence="1">With its partner (PsbE) binds heme. PSII binds additional chlorophylls, carotenoids and specific lipids.</text>
</comment>
<comment type="subunit">
    <text evidence="1">Heterodimer of an alpha subunit and a beta subunit. PSII is composed of 1 copy each of membrane proteins PsbA, PsbB, PsbC, PsbD, PsbE, PsbF, PsbH, PsbI, PsbJ, PsbK, PsbL, PsbM, PsbT, PsbX, PsbY, PsbZ, Psb30/Ycf12, at least 3 peripheral proteins of the oxygen-evolving complex and a large number of cofactors. It forms dimeric complexes.</text>
</comment>
<comment type="subcellular location">
    <subcellularLocation>
        <location evidence="1">Plastid</location>
        <location evidence="1">Chloroplast thylakoid membrane</location>
        <topology evidence="1">Single-pass membrane protein</topology>
    </subcellularLocation>
</comment>
<comment type="similarity">
    <text evidence="1">Belongs to the PsbE/PsbF family.</text>
</comment>
<dbReference type="EMBL" id="AY007485">
    <property type="protein sequence ID" value="AAG27023.1"/>
    <property type="molecule type" value="Genomic_DNA"/>
</dbReference>
<dbReference type="RefSeq" id="YP_009378429.1">
    <property type="nucleotide sequence ID" value="NC_034908.1"/>
</dbReference>
<dbReference type="SMR" id="Q7HIT9"/>
<dbReference type="GeneID" id="32956315"/>
<dbReference type="GO" id="GO:0009535">
    <property type="term" value="C:chloroplast thylakoid membrane"/>
    <property type="evidence" value="ECO:0007669"/>
    <property type="project" value="UniProtKB-SubCell"/>
</dbReference>
<dbReference type="GO" id="GO:0009539">
    <property type="term" value="C:photosystem II reaction center"/>
    <property type="evidence" value="ECO:0007669"/>
    <property type="project" value="InterPro"/>
</dbReference>
<dbReference type="GO" id="GO:0009055">
    <property type="term" value="F:electron transfer activity"/>
    <property type="evidence" value="ECO:0007669"/>
    <property type="project" value="UniProtKB-UniRule"/>
</dbReference>
<dbReference type="GO" id="GO:0020037">
    <property type="term" value="F:heme binding"/>
    <property type="evidence" value="ECO:0007669"/>
    <property type="project" value="InterPro"/>
</dbReference>
<dbReference type="GO" id="GO:0005506">
    <property type="term" value="F:iron ion binding"/>
    <property type="evidence" value="ECO:0007669"/>
    <property type="project" value="UniProtKB-UniRule"/>
</dbReference>
<dbReference type="GO" id="GO:0009767">
    <property type="term" value="P:photosynthetic electron transport chain"/>
    <property type="evidence" value="ECO:0007669"/>
    <property type="project" value="InterPro"/>
</dbReference>
<dbReference type="HAMAP" id="MF_00643">
    <property type="entry name" value="PSII_PsbF"/>
    <property type="match status" value="1"/>
</dbReference>
<dbReference type="InterPro" id="IPR006241">
    <property type="entry name" value="PSII_cyt_b559_bsu"/>
</dbReference>
<dbReference type="InterPro" id="IPR006216">
    <property type="entry name" value="PSII_cyt_b559_CS"/>
</dbReference>
<dbReference type="InterPro" id="IPR013081">
    <property type="entry name" value="PSII_cyt_b559_N"/>
</dbReference>
<dbReference type="NCBIfam" id="TIGR01333">
    <property type="entry name" value="cyt_b559_beta"/>
    <property type="match status" value="1"/>
</dbReference>
<dbReference type="Pfam" id="PF00283">
    <property type="entry name" value="Cytochrom_B559"/>
    <property type="match status" value="1"/>
</dbReference>
<dbReference type="PIRSF" id="PIRSF000037">
    <property type="entry name" value="PsbF"/>
    <property type="match status" value="1"/>
</dbReference>
<dbReference type="SUPFAM" id="SSF161045">
    <property type="entry name" value="Cytochrome b559 subunits"/>
    <property type="match status" value="1"/>
</dbReference>
<dbReference type="PROSITE" id="PS00537">
    <property type="entry name" value="CYTOCHROME_B559"/>
    <property type="match status" value="1"/>
</dbReference>
<sequence length="39" mass="4484">MTIDRTYPIFTVRWLAVHGLAVPTVFFLGSISAMQFIQR</sequence>
<gene>
    <name evidence="1" type="primary">psbF</name>
</gene>
<accession>Q7HIT9</accession>
<evidence type="ECO:0000255" key="1">
    <source>
        <dbReference type="HAMAP-Rule" id="MF_00643"/>
    </source>
</evidence>
<organism>
    <name type="scientific">Schisandra chinensis</name>
    <name type="common">Chinese magnolia vine</name>
    <name type="synonym">Kadsura chinensis</name>
    <dbReference type="NCBI Taxonomy" id="50507"/>
    <lineage>
        <taxon>Eukaryota</taxon>
        <taxon>Viridiplantae</taxon>
        <taxon>Streptophyta</taxon>
        <taxon>Embryophyta</taxon>
        <taxon>Tracheophyta</taxon>
        <taxon>Spermatophyta</taxon>
        <taxon>Magnoliopsida</taxon>
        <taxon>Austrobaileyales</taxon>
        <taxon>Schisandraceae</taxon>
        <taxon>Schisandra</taxon>
    </lineage>
</organism>
<name>PSBF_SCHCH</name>
<geneLocation type="chloroplast"/>
<feature type="chain" id="PRO_0000200450" description="Cytochrome b559 subunit beta">
    <location>
        <begin position="1"/>
        <end position="39"/>
    </location>
</feature>
<feature type="transmembrane region" description="Helical" evidence="1">
    <location>
        <begin position="14"/>
        <end position="30"/>
    </location>
</feature>
<feature type="binding site" description="axial binding residue" evidence="1">
    <location>
        <position position="18"/>
    </location>
    <ligand>
        <name>heme</name>
        <dbReference type="ChEBI" id="CHEBI:30413"/>
        <note>ligand shared with alpha subunit</note>
    </ligand>
    <ligandPart>
        <name>Fe</name>
        <dbReference type="ChEBI" id="CHEBI:18248"/>
    </ligandPart>
</feature>